<sequence>MAQVQAPSSHSPPPPAVVNDGAATASATPGIGVGGGGDGVTHGALCSLYVGDLDFNVTDSQLYDYFTEVCQVVSVRVCRDAATNTSLGYGYVNYSNTDDAEKAMQKLNYSYLNGKMIRITYSSRDSSARRSGVGNLFVKNLDKSVDNKTLHEAFSGCGTIVSCKVATDHMGQSRGYGFVQFDTEDSAKNAIEKLNGKVLNDKQIFVGPFLRKEERESAADKMKFTNVYVKNLSEATTDDELKTTFGQYGSISSAVVMRDGDGKSRCFGFVNFENPEDAARAVEALNGKKFDDKEWYVGKAQKKSERELELSRRYEQGSSDGGNKFDGLNLYVKNLDDTVTDEKLRELFAEFGTITSCKVMRDPSGTSKGSGFVAFSAASEASRVLNEMNGKMVGGKPLYVALAQRKEERRAKLQAQFSQMRPAFIPGVGPRMPIFTGGAPGLGQQIFYGQGPPPIIPHQPGFGYQPQLVPGMRPAFFGGPMMQPGQQGPRPGGRRSGDGPMRHQHQQPMPYMQPQMMPRGRGYRYPSGGRNMPDGPMPGGMVPVAYDMNVMPYSQPMSAGQLATSLANATPAQQRTLLGESLYPLVDQIESEHAAKVTGMLLEMDQTEVLHLLESPEALNAKVSEALDVLRNVNQPSSQGSEGNKSGSPSDLLASLSINDHL</sequence>
<organism>
    <name type="scientific">Arabidopsis thaliana</name>
    <name type="common">Mouse-ear cress</name>
    <dbReference type="NCBI Taxonomy" id="3702"/>
    <lineage>
        <taxon>Eukaryota</taxon>
        <taxon>Viridiplantae</taxon>
        <taxon>Streptophyta</taxon>
        <taxon>Embryophyta</taxon>
        <taxon>Tracheophyta</taxon>
        <taxon>Spermatophyta</taxon>
        <taxon>Magnoliopsida</taxon>
        <taxon>eudicotyledons</taxon>
        <taxon>Gunneridae</taxon>
        <taxon>Pentapetalae</taxon>
        <taxon>rosids</taxon>
        <taxon>malvids</taxon>
        <taxon>Brassicales</taxon>
        <taxon>Brassicaceae</taxon>
        <taxon>Camelineae</taxon>
        <taxon>Arabidopsis</taxon>
    </lineage>
</organism>
<gene>
    <name type="primary">PAB4</name>
    <name type="ordered locus">At2g23350</name>
    <name type="ORF">T20D16.2</name>
</gene>
<reference key="1">
    <citation type="journal article" date="1999" name="Nature">
        <title>Sequence and analysis of chromosome 2 of the plant Arabidopsis thaliana.</title>
        <authorList>
            <person name="Lin X."/>
            <person name="Kaul S."/>
            <person name="Rounsley S.D."/>
            <person name="Shea T.P."/>
            <person name="Benito M.-I."/>
            <person name="Town C.D."/>
            <person name="Fujii C.Y."/>
            <person name="Mason T.M."/>
            <person name="Bowman C.L."/>
            <person name="Barnstead M.E."/>
            <person name="Feldblyum T.V."/>
            <person name="Buell C.R."/>
            <person name="Ketchum K.A."/>
            <person name="Lee J.J."/>
            <person name="Ronning C.M."/>
            <person name="Koo H.L."/>
            <person name="Moffat K.S."/>
            <person name="Cronin L.A."/>
            <person name="Shen M."/>
            <person name="Pai G."/>
            <person name="Van Aken S."/>
            <person name="Umayam L."/>
            <person name="Tallon L.J."/>
            <person name="Gill J.E."/>
            <person name="Adams M.D."/>
            <person name="Carrera A.J."/>
            <person name="Creasy T.H."/>
            <person name="Goodman H.M."/>
            <person name="Somerville C.R."/>
            <person name="Copenhaver G.P."/>
            <person name="Preuss D."/>
            <person name="Nierman W.C."/>
            <person name="White O."/>
            <person name="Eisen J.A."/>
            <person name="Salzberg S.L."/>
            <person name="Fraser C.M."/>
            <person name="Venter J.C."/>
        </authorList>
    </citation>
    <scope>NUCLEOTIDE SEQUENCE [LARGE SCALE GENOMIC DNA]</scope>
    <source>
        <strain>cv. Columbia</strain>
    </source>
</reference>
<reference key="2">
    <citation type="journal article" date="2017" name="Plant J.">
        <title>Araport11: a complete reannotation of the Arabidopsis thaliana reference genome.</title>
        <authorList>
            <person name="Cheng C.Y."/>
            <person name="Krishnakumar V."/>
            <person name="Chan A.P."/>
            <person name="Thibaud-Nissen F."/>
            <person name="Schobel S."/>
            <person name="Town C.D."/>
        </authorList>
    </citation>
    <scope>GENOME REANNOTATION</scope>
    <source>
        <strain>cv. Columbia</strain>
    </source>
</reference>
<reference key="3">
    <citation type="journal article" date="2003" name="Science">
        <title>Empirical analysis of transcriptional activity in the Arabidopsis genome.</title>
        <authorList>
            <person name="Yamada K."/>
            <person name="Lim J."/>
            <person name="Dale J.M."/>
            <person name="Chen H."/>
            <person name="Shinn P."/>
            <person name="Palm C.J."/>
            <person name="Southwick A.M."/>
            <person name="Wu H.C."/>
            <person name="Kim C.J."/>
            <person name="Nguyen M."/>
            <person name="Pham P.K."/>
            <person name="Cheuk R.F."/>
            <person name="Karlin-Newmann G."/>
            <person name="Liu S.X."/>
            <person name="Lam B."/>
            <person name="Sakano H."/>
            <person name="Wu T."/>
            <person name="Yu G."/>
            <person name="Miranda M."/>
            <person name="Quach H.L."/>
            <person name="Tripp M."/>
            <person name="Chang C.H."/>
            <person name="Lee J.M."/>
            <person name="Toriumi M.J."/>
            <person name="Chan M.M."/>
            <person name="Tang C.C."/>
            <person name="Onodera C.S."/>
            <person name="Deng J.M."/>
            <person name="Akiyama K."/>
            <person name="Ansari Y."/>
            <person name="Arakawa T."/>
            <person name="Banh J."/>
            <person name="Banno F."/>
            <person name="Bowser L."/>
            <person name="Brooks S.Y."/>
            <person name="Carninci P."/>
            <person name="Chao Q."/>
            <person name="Choy N."/>
            <person name="Enju A."/>
            <person name="Goldsmith A.D."/>
            <person name="Gurjal M."/>
            <person name="Hansen N.F."/>
            <person name="Hayashizaki Y."/>
            <person name="Johnson-Hopson C."/>
            <person name="Hsuan V.W."/>
            <person name="Iida K."/>
            <person name="Karnes M."/>
            <person name="Khan S."/>
            <person name="Koesema E."/>
            <person name="Ishida J."/>
            <person name="Jiang P.X."/>
            <person name="Jones T."/>
            <person name="Kawai J."/>
            <person name="Kamiya A."/>
            <person name="Meyers C."/>
            <person name="Nakajima M."/>
            <person name="Narusaka M."/>
            <person name="Seki M."/>
            <person name="Sakurai T."/>
            <person name="Satou M."/>
            <person name="Tamse R."/>
            <person name="Vaysberg M."/>
            <person name="Wallender E.K."/>
            <person name="Wong C."/>
            <person name="Yamamura Y."/>
            <person name="Yuan S."/>
            <person name="Shinozaki K."/>
            <person name="Davis R.W."/>
            <person name="Theologis A."/>
            <person name="Ecker J.R."/>
        </authorList>
    </citation>
    <scope>NUCLEOTIDE SEQUENCE [LARGE SCALE MRNA]</scope>
    <source>
        <strain>cv. Columbia</strain>
    </source>
</reference>
<reference key="4">
    <citation type="journal article" date="2003" name="Genetics">
        <title>Unexpected complexity of poly(A)-binding protein gene families in flowering plants: three conserved lineages that are at least 200 million years old and possible auto- and cross-regulation.</title>
        <authorList>
            <person name="Belostotsky D.A."/>
        </authorList>
    </citation>
    <scope>GENE FAMILY</scope>
</reference>
<reference key="5">
    <citation type="journal article" date="2008" name="J. Gen. Virol.">
        <title>Arabidopsis thaliana class II poly(A)-binding proteins are required for efficient multiplication of turnip mosaic virus.</title>
        <authorList>
            <person name="Dufresne P.J."/>
            <person name="Ubalijoro E."/>
            <person name="Fortin M.G."/>
            <person name="Laliberte J.F."/>
        </authorList>
    </citation>
    <scope>INDUCTION</scope>
    <scope>INTERACTION WITH VIRAL VPG-PRO</scope>
    <scope>DISRUPTION PHENOTYPE</scope>
</reference>
<reference key="6">
    <citation type="journal article" date="2012" name="Plant Sci.">
        <title>ERD15--an attenuator of plant ABA responses and stomatal aperture.</title>
        <authorList>
            <person name="Aalto M.K."/>
            <person name="Helenius E."/>
            <person name="Kariola T."/>
            <person name="Pennanen V."/>
            <person name="Heino P."/>
            <person name="Horak H."/>
            <person name="Puzorjova I."/>
            <person name="Kollist H."/>
            <person name="Palva E.T."/>
        </authorList>
    </citation>
    <scope>INTERACTION WITH ERD15/CID1</scope>
</reference>
<protein>
    <recommendedName>
        <fullName>Polyadenylate-binding protein 4</fullName>
        <shortName>PABP-4</shortName>
        <shortName>Poly(A)-binding protein 4</shortName>
    </recommendedName>
</protein>
<feature type="chain" id="PRO_0000422643" description="Polyadenylate-binding protein 4">
    <location>
        <begin position="1"/>
        <end position="662"/>
    </location>
</feature>
<feature type="domain" description="RRM 1" evidence="2">
    <location>
        <begin position="46"/>
        <end position="124"/>
    </location>
</feature>
<feature type="domain" description="RRM 2" evidence="2">
    <location>
        <begin position="134"/>
        <end position="211"/>
    </location>
</feature>
<feature type="domain" description="RRM 3" evidence="2">
    <location>
        <begin position="225"/>
        <end position="302"/>
    </location>
</feature>
<feature type="domain" description="RRM 4" evidence="2">
    <location>
        <begin position="328"/>
        <end position="405"/>
    </location>
</feature>
<feature type="domain" description="PABC" evidence="3">
    <location>
        <begin position="558"/>
        <end position="635"/>
    </location>
</feature>
<feature type="region of interest" description="Disordered" evidence="4">
    <location>
        <begin position="1"/>
        <end position="23"/>
    </location>
</feature>
<feature type="region of interest" description="Disordered" evidence="4">
    <location>
        <begin position="480"/>
        <end position="518"/>
    </location>
</feature>
<feature type="region of interest" description="Disordered" evidence="4">
    <location>
        <begin position="634"/>
        <end position="662"/>
    </location>
</feature>
<feature type="compositionally biased region" description="Low complexity" evidence="4">
    <location>
        <begin position="480"/>
        <end position="489"/>
    </location>
</feature>
<feature type="compositionally biased region" description="Low complexity" evidence="4">
    <location>
        <begin position="506"/>
        <end position="518"/>
    </location>
</feature>
<feature type="compositionally biased region" description="Polar residues" evidence="4">
    <location>
        <begin position="634"/>
        <end position="649"/>
    </location>
</feature>
<feature type="sequence conflict" description="In Ref. 3; AAK25927." evidence="7" ref="3">
    <original>E</original>
    <variation>D</variation>
    <location>
        <position position="642"/>
    </location>
</feature>
<accession>O22173</accession>
<accession>Q9C5J0</accession>
<dbReference type="EMBL" id="AC002391">
    <property type="protein sequence ID" value="AAB87097.1"/>
    <property type="molecule type" value="Genomic_DNA"/>
</dbReference>
<dbReference type="EMBL" id="CP002685">
    <property type="protein sequence ID" value="AEC07446.1"/>
    <property type="molecule type" value="Genomic_DNA"/>
</dbReference>
<dbReference type="EMBL" id="AF360217">
    <property type="protein sequence ID" value="AAK25927.1"/>
    <property type="molecule type" value="mRNA"/>
</dbReference>
<dbReference type="EMBL" id="AY050859">
    <property type="protein sequence ID" value="AAK92796.1"/>
    <property type="molecule type" value="mRNA"/>
</dbReference>
<dbReference type="EMBL" id="AY079389">
    <property type="protein sequence ID" value="AAL85120.1"/>
    <property type="molecule type" value="mRNA"/>
</dbReference>
<dbReference type="PIR" id="T00497">
    <property type="entry name" value="T00497"/>
</dbReference>
<dbReference type="RefSeq" id="NP_179916.1">
    <property type="nucleotide sequence ID" value="NM_127899.4"/>
</dbReference>
<dbReference type="SMR" id="O22173"/>
<dbReference type="BioGRID" id="2219">
    <property type="interactions" value="5"/>
</dbReference>
<dbReference type="FunCoup" id="O22173">
    <property type="interactions" value="3028"/>
</dbReference>
<dbReference type="IntAct" id="O22173">
    <property type="interactions" value="4"/>
</dbReference>
<dbReference type="STRING" id="3702.O22173"/>
<dbReference type="GlyGen" id="O22173">
    <property type="glycosylation" value="4 sites, 1 O-linked glycan (3 sites)"/>
</dbReference>
<dbReference type="iPTMnet" id="O22173"/>
<dbReference type="MetOSite" id="O22173"/>
<dbReference type="PaxDb" id="3702-AT2G23350.1"/>
<dbReference type="ProMEX" id="O22173"/>
<dbReference type="ProteomicsDB" id="248630"/>
<dbReference type="EnsemblPlants" id="AT2G23350.1">
    <property type="protein sequence ID" value="AT2G23350.1"/>
    <property type="gene ID" value="AT2G23350"/>
</dbReference>
<dbReference type="GeneID" id="816867"/>
<dbReference type="Gramene" id="AT2G23350.1">
    <property type="protein sequence ID" value="AT2G23350.1"/>
    <property type="gene ID" value="AT2G23350"/>
</dbReference>
<dbReference type="KEGG" id="ath:AT2G23350"/>
<dbReference type="Araport" id="AT2G23350"/>
<dbReference type="TAIR" id="AT2G23350">
    <property type="gene designation" value="PAB4"/>
</dbReference>
<dbReference type="eggNOG" id="KOG0123">
    <property type="taxonomic scope" value="Eukaryota"/>
</dbReference>
<dbReference type="HOGENOM" id="CLU_012062_22_4_1"/>
<dbReference type="InParanoid" id="O22173"/>
<dbReference type="OMA" id="MIRITYS"/>
<dbReference type="OrthoDB" id="19742at2759"/>
<dbReference type="PhylomeDB" id="O22173"/>
<dbReference type="CD-CODE" id="60F64496">
    <property type="entry name" value="P-body"/>
</dbReference>
<dbReference type="PRO" id="PR:O22173"/>
<dbReference type="Proteomes" id="UP000006548">
    <property type="component" value="Chromosome 2"/>
</dbReference>
<dbReference type="ExpressionAtlas" id="O22173">
    <property type="expression patterns" value="baseline and differential"/>
</dbReference>
<dbReference type="GO" id="GO:0005829">
    <property type="term" value="C:cytosol"/>
    <property type="evidence" value="ECO:0007005"/>
    <property type="project" value="TAIR"/>
</dbReference>
<dbReference type="GO" id="GO:0005634">
    <property type="term" value="C:nucleus"/>
    <property type="evidence" value="ECO:0007669"/>
    <property type="project" value="UniProtKB-SubCell"/>
</dbReference>
<dbReference type="GO" id="GO:0005773">
    <property type="term" value="C:vacuole"/>
    <property type="evidence" value="ECO:0007005"/>
    <property type="project" value="TAIR"/>
</dbReference>
<dbReference type="GO" id="GO:0003729">
    <property type="term" value="F:mRNA binding"/>
    <property type="evidence" value="ECO:0000314"/>
    <property type="project" value="TAIR"/>
</dbReference>
<dbReference type="GO" id="GO:0006417">
    <property type="term" value="P:regulation of translation"/>
    <property type="evidence" value="ECO:0007669"/>
    <property type="project" value="UniProtKB-KW"/>
</dbReference>
<dbReference type="CDD" id="cd12379">
    <property type="entry name" value="RRM2_I_PABPs"/>
    <property type="match status" value="1"/>
</dbReference>
<dbReference type="CDD" id="cd12380">
    <property type="entry name" value="RRM3_I_PABPs"/>
    <property type="match status" value="1"/>
</dbReference>
<dbReference type="CDD" id="cd12381">
    <property type="entry name" value="RRM4_I_PABPs"/>
    <property type="match status" value="1"/>
</dbReference>
<dbReference type="FunFam" id="1.10.1900.10:FF:000003">
    <property type="entry name" value="Polyadenylate-binding protein"/>
    <property type="match status" value="1"/>
</dbReference>
<dbReference type="FunFam" id="3.30.70.330:FF:000239">
    <property type="entry name" value="Polyadenylate-binding protein"/>
    <property type="match status" value="1"/>
</dbReference>
<dbReference type="FunFam" id="3.30.70.330:FF:000564">
    <property type="entry name" value="Polyadenylate-binding protein"/>
    <property type="match status" value="1"/>
</dbReference>
<dbReference type="FunFam" id="3.30.70.330:FF:001207">
    <property type="entry name" value="Polyadenylate-binding protein"/>
    <property type="match status" value="1"/>
</dbReference>
<dbReference type="Gene3D" id="3.30.70.330">
    <property type="match status" value="4"/>
</dbReference>
<dbReference type="Gene3D" id="1.10.1900.10">
    <property type="entry name" value="c-terminal domain of poly(a) binding protein"/>
    <property type="match status" value="1"/>
</dbReference>
<dbReference type="InterPro" id="IPR012677">
    <property type="entry name" value="Nucleotide-bd_a/b_plait_sf"/>
</dbReference>
<dbReference type="InterPro" id="IPR036053">
    <property type="entry name" value="PABP-dom"/>
</dbReference>
<dbReference type="InterPro" id="IPR006515">
    <property type="entry name" value="PABP_1234"/>
</dbReference>
<dbReference type="InterPro" id="IPR002004">
    <property type="entry name" value="PABP_HYD_C"/>
</dbReference>
<dbReference type="InterPro" id="IPR035979">
    <property type="entry name" value="RBD_domain_sf"/>
</dbReference>
<dbReference type="InterPro" id="IPR045305">
    <property type="entry name" value="RRM2_I_PABPs"/>
</dbReference>
<dbReference type="InterPro" id="IPR000504">
    <property type="entry name" value="RRM_dom"/>
</dbReference>
<dbReference type="InterPro" id="IPR003954">
    <property type="entry name" value="RRM_dom_euk"/>
</dbReference>
<dbReference type="NCBIfam" id="TIGR01628">
    <property type="entry name" value="PABP-1234"/>
    <property type="match status" value="1"/>
</dbReference>
<dbReference type="PANTHER" id="PTHR24012">
    <property type="entry name" value="RNA BINDING PROTEIN"/>
    <property type="match status" value="1"/>
</dbReference>
<dbReference type="Pfam" id="PF00658">
    <property type="entry name" value="MLLE"/>
    <property type="match status" value="1"/>
</dbReference>
<dbReference type="Pfam" id="PF00076">
    <property type="entry name" value="RRM_1"/>
    <property type="match status" value="4"/>
</dbReference>
<dbReference type="SMART" id="SM00517">
    <property type="entry name" value="PolyA"/>
    <property type="match status" value="1"/>
</dbReference>
<dbReference type="SMART" id="SM00360">
    <property type="entry name" value="RRM"/>
    <property type="match status" value="4"/>
</dbReference>
<dbReference type="SMART" id="SM00361">
    <property type="entry name" value="RRM_1"/>
    <property type="match status" value="4"/>
</dbReference>
<dbReference type="SUPFAM" id="SSF63570">
    <property type="entry name" value="PABC (PABP) domain"/>
    <property type="match status" value="1"/>
</dbReference>
<dbReference type="SUPFAM" id="SSF54928">
    <property type="entry name" value="RNA-binding domain, RBD"/>
    <property type="match status" value="3"/>
</dbReference>
<dbReference type="PROSITE" id="PS51309">
    <property type="entry name" value="PABC"/>
    <property type="match status" value="1"/>
</dbReference>
<dbReference type="PROSITE" id="PS50102">
    <property type="entry name" value="RRM"/>
    <property type="match status" value="4"/>
</dbReference>
<comment type="function">
    <text evidence="1">Binds the poly(A) tail of mRNA. Appears to be an important mediator of the multiple roles of the poly(A) tail in mRNA biogenesis, stability and translation (By similarity). During infection with potyvirus TuMV, acts as a potential integral component of the viral replicase complex that could play an important role in the regulation of potyviral RNA-dependent RNA polymerase (RdRp) (By similarity).</text>
</comment>
<comment type="subunit">
    <text evidence="5 6">Interacts with ERD15/CID1. Interacts with Turnip mosaic virus (TuMV) VPg-Pro.</text>
</comment>
<comment type="subcellular location">
    <subcellularLocation>
        <location evidence="1">Cytoplasm</location>
    </subcellularLocation>
    <subcellularLocation>
        <location evidence="1">Nucleus</location>
    </subcellularLocation>
</comment>
<comment type="induction">
    <text evidence="5">By potyvirus TuMV infection.</text>
</comment>
<comment type="disruption phenotype">
    <text evidence="5">Pab2 and pab4 double mutants show significant growth and development defects and more resistance to Turnip mosaic virus (TuMV).</text>
</comment>
<comment type="miscellaneous">
    <text>A.thaliana contains 8 PABP genes.</text>
</comment>
<comment type="similarity">
    <text evidence="7">Belongs to the polyadenylate-binding protein type-1 family.</text>
</comment>
<evidence type="ECO:0000250" key="1"/>
<evidence type="ECO:0000255" key="2">
    <source>
        <dbReference type="PROSITE-ProRule" id="PRU00176"/>
    </source>
</evidence>
<evidence type="ECO:0000255" key="3">
    <source>
        <dbReference type="PROSITE-ProRule" id="PRU00641"/>
    </source>
</evidence>
<evidence type="ECO:0000256" key="4">
    <source>
        <dbReference type="SAM" id="MobiDB-lite"/>
    </source>
</evidence>
<evidence type="ECO:0000269" key="5">
    <source>
    </source>
</evidence>
<evidence type="ECO:0000269" key="6">
    <source>
    </source>
</evidence>
<evidence type="ECO:0000305" key="7"/>
<proteinExistence type="evidence at protein level"/>
<name>PABP4_ARATH</name>
<keyword id="KW-0963">Cytoplasm</keyword>
<keyword id="KW-0945">Host-virus interaction</keyword>
<keyword id="KW-0539">Nucleus</keyword>
<keyword id="KW-1185">Reference proteome</keyword>
<keyword id="KW-0677">Repeat</keyword>
<keyword id="KW-0694">RNA-binding</keyword>
<keyword id="KW-0810">Translation regulation</keyword>